<feature type="initiator methionine" description="Removed" evidence="1">
    <location>
        <position position="1"/>
    </location>
</feature>
<feature type="chain" id="PRO_0000182597" description="Flagellin B">
    <location>
        <begin position="2"/>
        <end position="576"/>
    </location>
</feature>
<feature type="sequence conflict" description="In Ref. 1; AAA23025." evidence="4" ref="1">
    <original>A</original>
    <variation>R</variation>
    <location>
        <position position="564"/>
    </location>
</feature>
<evidence type="ECO:0000250" key="1"/>
<evidence type="ECO:0000269" key="2">
    <source>
    </source>
</evidence>
<evidence type="ECO:0000269" key="3">
    <source>
    </source>
</evidence>
<evidence type="ECO:0000305" key="4"/>
<proteinExistence type="evidence at protein level"/>
<accession>P22252</accession>
<accession>A8FN17</accession>
<reference key="1">
    <citation type="journal article" date="1990" name="J. Biol. Chem.">
        <title>Structural and functional analysis of two Campylobacter jejuni flagellin genes.</title>
        <authorList>
            <person name="Nuijten P.J."/>
            <person name="van Asten F.J."/>
            <person name="Gaastra W."/>
            <person name="van der Zeijst B.A.M."/>
        </authorList>
    </citation>
    <scope>NUCLEOTIDE SEQUENCE [GENOMIC DNA]</scope>
</reference>
<reference key="2">
    <citation type="journal article" date="2007" name="J. Bacteriol.">
        <title>The complete genome sequence of Campylobacter jejuni strain 81116 (NCTC11828).</title>
        <authorList>
            <person name="Pearson B.M."/>
            <person name="Gaskin D.J.H."/>
            <person name="Segers R.P.A.M."/>
            <person name="Wells J.M."/>
            <person name="Nuijten P.J.M."/>
            <person name="van Vliet A.H.M."/>
        </authorList>
    </citation>
    <scope>NUCLEOTIDE SEQUENCE [LARGE SCALE GENOMIC DNA]</scope>
    <source>
        <strain>81116 / NCTC 11828</strain>
    </source>
</reference>
<reference key="3">
    <citation type="journal article" date="2016" name="Mol. Microbiol.">
        <title>Feedback control of Campylobacter jejuni flagellin levels through reciprocal binding of FliW to flagellin and the global regulator CsrA.</title>
        <authorList>
            <person name="Radomska K.A."/>
            <person name="Ordonez S.R."/>
            <person name="Woesten M.M."/>
            <person name="Wagenaar J.A."/>
            <person name="van Putten J.P."/>
        </authorList>
    </citation>
    <scope>INTERACTION WITH FLIW</scope>
    <scope>SUBUNIT</scope>
    <scope>SUBCELLULAR LOCATION</scope>
    <scope>DISRUPTION PHENOTYPE</scope>
    <source>
        <strain>81116 / NCTC 11828</strain>
    </source>
</reference>
<reference key="4">
    <citation type="journal article" date="2017" name="Front. Microbiol.">
        <title>Importance of Campylobacter jejuni FliS and FliW in flagella biogenesis and flagellin secretion.</title>
        <authorList>
            <person name="Radomska K.A."/>
            <person name="Woesten M.M.S.M."/>
            <person name="Ordonez S.R."/>
            <person name="Wagenaar J.A."/>
            <person name="van Putten J.P.M."/>
        </authorList>
    </citation>
    <scope>INTERACTION WITH FLIS</scope>
    <scope>SUBUNIT</scope>
    <scope>SUBCELLULAR LOCATION</scope>
    <source>
        <strain>81116 / NCTC 11828</strain>
    </source>
</reference>
<sequence length="576" mass="59774">MGFRINTNIGALNAHANSVVNSNELDKSLSRLSSGLRINSAADDASGMAIADSLRSQAATLGQAINNGNDAIGILQTADKAMDEQLKILDTIKTKATQAAQDGQSLKTRTMLQADINRLMEELDNIANTTSFNGKQLLSGNFTNQEFQIGASSNQTIKATIGATQSSKIGVTRFETGAQSFTSGVVGLTIKNYNGIEDFKFDNVVISTSVGTGLGALAEEINKSADKTGVRATYDVKTTGVYAIKEGTTSQDFAINGVVIGQINYKDGDNNGQLVSAINAVKDTTGVQASKDENGKLVLTSADGRGIKITGDIGVGSGILANQKENYGRLSLVKNDGRDINISGTNLSAIGMGTTDMISQSSVSLRESKGQISATNADAMGFNSYKGGGKFVFTQNVSSISAFMSAQGSGFSRGSGFSVGSGKNLSVGLSQGIQIISSAASMSNTYVVSAGSGFSSGSGNSQFAALKTTAANTTDETAGVTTLKGAMAVMDIAETAITNLDQIRADIGSVQNQLQVTINNITVTQVNVKAAESTIRDVDFASESANFSKYNILAQSGSYAMSQANAVQQNVLKLLQ</sequence>
<keyword id="KW-0975">Bacterial flagellum</keyword>
<keyword id="KW-0964">Secreted</keyword>
<organism>
    <name type="scientific">Campylobacter jejuni subsp. jejuni serotype O:6 (strain 81116 / NCTC 11828)</name>
    <dbReference type="NCBI Taxonomy" id="407148"/>
    <lineage>
        <taxon>Bacteria</taxon>
        <taxon>Pseudomonadati</taxon>
        <taxon>Campylobacterota</taxon>
        <taxon>Epsilonproteobacteria</taxon>
        <taxon>Campylobacterales</taxon>
        <taxon>Campylobacteraceae</taxon>
        <taxon>Campylobacter</taxon>
    </lineage>
</organism>
<name>FLB_CAMJ8</name>
<gene>
    <name type="primary">flaB</name>
    <name type="ordered locus">C8J_1255</name>
</gene>
<protein>
    <recommendedName>
        <fullName>Flagellin B</fullName>
    </recommendedName>
</protein>
<dbReference type="EMBL" id="J05635">
    <property type="protein sequence ID" value="AAA23025.1"/>
    <property type="molecule type" value="Genomic_DNA"/>
</dbReference>
<dbReference type="EMBL" id="CP000814">
    <property type="protein sequence ID" value="ABV52854.1"/>
    <property type="molecule type" value="Genomic_DNA"/>
</dbReference>
<dbReference type="PIR" id="B39228">
    <property type="entry name" value="B39228"/>
</dbReference>
<dbReference type="RefSeq" id="WP_012006751.1">
    <property type="nucleotide sequence ID" value="NC_009839.1"/>
</dbReference>
<dbReference type="SMR" id="P22252"/>
<dbReference type="KEGG" id="cju:C8J_1255"/>
<dbReference type="HOGENOM" id="CLU_011142_7_1_7"/>
<dbReference type="PHI-base" id="PHI:9293"/>
<dbReference type="GO" id="GO:0009288">
    <property type="term" value="C:bacterial-type flagellum"/>
    <property type="evidence" value="ECO:0007669"/>
    <property type="project" value="UniProtKB-SubCell"/>
</dbReference>
<dbReference type="GO" id="GO:0005576">
    <property type="term" value="C:extracellular region"/>
    <property type="evidence" value="ECO:0007669"/>
    <property type="project" value="UniProtKB-SubCell"/>
</dbReference>
<dbReference type="GO" id="GO:0005198">
    <property type="term" value="F:structural molecule activity"/>
    <property type="evidence" value="ECO:0007669"/>
    <property type="project" value="InterPro"/>
</dbReference>
<dbReference type="Gene3D" id="3.30.70.2120">
    <property type="match status" value="1"/>
</dbReference>
<dbReference type="Gene3D" id="1.20.1330.10">
    <property type="entry name" value="f41 fragment of flagellin, N-terminal domain"/>
    <property type="match status" value="2"/>
</dbReference>
<dbReference type="Gene3D" id="6.10.10.10">
    <property type="entry name" value="Flagellar export chaperone, C-terminal domain"/>
    <property type="match status" value="1"/>
</dbReference>
<dbReference type="InterPro" id="IPR001492">
    <property type="entry name" value="Flagellin"/>
</dbReference>
<dbReference type="InterPro" id="IPR046358">
    <property type="entry name" value="Flagellin_C"/>
</dbReference>
<dbReference type="InterPro" id="IPR042187">
    <property type="entry name" value="Flagellin_C_sub2"/>
</dbReference>
<dbReference type="InterPro" id="IPR010810">
    <property type="entry name" value="Flagellin_hook_IN_motif"/>
</dbReference>
<dbReference type="InterPro" id="IPR001029">
    <property type="entry name" value="Flagellin_N"/>
</dbReference>
<dbReference type="NCBIfam" id="NF006264">
    <property type="entry name" value="PRK08411.1"/>
    <property type="match status" value="1"/>
</dbReference>
<dbReference type="NCBIfam" id="NF010116">
    <property type="entry name" value="PRK13589.1"/>
    <property type="match status" value="1"/>
</dbReference>
<dbReference type="PANTHER" id="PTHR42792">
    <property type="entry name" value="FLAGELLIN"/>
    <property type="match status" value="1"/>
</dbReference>
<dbReference type="PANTHER" id="PTHR42792:SF2">
    <property type="entry name" value="FLAGELLIN"/>
    <property type="match status" value="1"/>
</dbReference>
<dbReference type="Pfam" id="PF00700">
    <property type="entry name" value="Flagellin_C"/>
    <property type="match status" value="1"/>
</dbReference>
<dbReference type="Pfam" id="PF07196">
    <property type="entry name" value="Flagellin_IN"/>
    <property type="match status" value="2"/>
</dbReference>
<dbReference type="Pfam" id="PF00669">
    <property type="entry name" value="Flagellin_N"/>
    <property type="match status" value="1"/>
</dbReference>
<dbReference type="PRINTS" id="PR00207">
    <property type="entry name" value="FLAGELLIN"/>
</dbReference>
<dbReference type="SUPFAM" id="SSF64518">
    <property type="entry name" value="Phase 1 flagellin"/>
    <property type="match status" value="1"/>
</dbReference>
<comment type="function">
    <text>Flagellin is the subunit protein which polymerizes to form the filaments of bacterial flagella.</text>
</comment>
<comment type="subunit">
    <text evidence="2 3 4">Heteromer of FlaA and FlaB (Probable). Interacts with FliW (PubMed:27353476). Interacts with FliS (PubMed:27353476).</text>
</comment>
<comment type="subcellular location">
    <subcellularLocation>
        <location evidence="2 3">Secreted</location>
    </subcellularLocation>
    <subcellularLocation>
        <location>Bacterial flagellum</location>
    </subcellularLocation>
</comment>
<comment type="disruption phenotype">
    <text evidence="2">In a double flaA-flaB deletion, cells grow faster and are non-motile, flagellar filaments are non-existent (PubMed:27353476).</text>
</comment>
<comment type="similarity">
    <text evidence="4">Belongs to the bacterial flagellin family.</text>
</comment>